<evidence type="ECO:0000255" key="1">
    <source>
        <dbReference type="HAMAP-Rule" id="MF_01707"/>
    </source>
</evidence>
<reference key="1">
    <citation type="journal article" date="2005" name="Nat. Biotechnol.">
        <title>The genome sequence of the ethanologenic bacterium Zymomonas mobilis ZM4.</title>
        <authorList>
            <person name="Seo J.-S."/>
            <person name="Chong H."/>
            <person name="Park H.S."/>
            <person name="Yoon K.-O."/>
            <person name="Jung C."/>
            <person name="Kim J.J."/>
            <person name="Hong J.H."/>
            <person name="Kim H."/>
            <person name="Kim J.-H."/>
            <person name="Kil J.-I."/>
            <person name="Park C.J."/>
            <person name="Oh H.-M."/>
            <person name="Lee J.-S."/>
            <person name="Jin S.-J."/>
            <person name="Um H.-W."/>
            <person name="Lee H.-J."/>
            <person name="Oh S.-J."/>
            <person name="Kim J.Y."/>
            <person name="Kang H.L."/>
            <person name="Lee S.Y."/>
            <person name="Lee K.J."/>
            <person name="Kang H.S."/>
        </authorList>
    </citation>
    <scope>NUCLEOTIDE SEQUENCE [LARGE SCALE GENOMIC DNA]</scope>
    <source>
        <strain>ATCC 31821 / ZM4 / CP4</strain>
    </source>
</reference>
<accession>Q5NQX0</accession>
<sequence>MGRKRLSDFGNARLACHDVSCLRGDRLLFTHLSFEVKAGEAVLITGANGIGKSSLLRLLAGFLKPFSGHIEKWGRVAFADEALAMDRHLPLEKALAYWAALDGVLGAEKEAMAVMALDILADSPVRLLSTGQRKRAVLARLLASQAAIWLLDEPANGLDAASVRALIEMIEHHRQKGGIILAVSHQGLDMADYKTLSLENFVANSGQSSGFFDLLDESHFS</sequence>
<comment type="function">
    <text evidence="1">Part of the ABC transporter complex CcmAB involved in the biogenesis of c-type cytochromes; once thought to export heme, this seems not to be the case, but its exact role is uncertain. Responsible for energy coupling to the transport system.</text>
</comment>
<comment type="catalytic activity">
    <reaction evidence="1">
        <text>heme b(in) + ATP + H2O = heme b(out) + ADP + phosphate + H(+)</text>
        <dbReference type="Rhea" id="RHEA:19261"/>
        <dbReference type="ChEBI" id="CHEBI:15377"/>
        <dbReference type="ChEBI" id="CHEBI:15378"/>
        <dbReference type="ChEBI" id="CHEBI:30616"/>
        <dbReference type="ChEBI" id="CHEBI:43474"/>
        <dbReference type="ChEBI" id="CHEBI:60344"/>
        <dbReference type="ChEBI" id="CHEBI:456216"/>
        <dbReference type="EC" id="7.6.2.5"/>
    </reaction>
</comment>
<comment type="subunit">
    <text evidence="1">The complex is composed of two ATP-binding proteins (CcmA) and two transmembrane proteins (CcmB).</text>
</comment>
<comment type="subcellular location">
    <subcellularLocation>
        <location evidence="1">Cell inner membrane</location>
        <topology evidence="1">Peripheral membrane protein</topology>
    </subcellularLocation>
</comment>
<comment type="similarity">
    <text evidence="1">Belongs to the ABC transporter superfamily. CcmA exporter (TC 3.A.1.107) family.</text>
</comment>
<gene>
    <name evidence="1" type="primary">ccmA</name>
    <name type="synonym">cycV</name>
    <name type="ordered locus">ZMO0260</name>
</gene>
<name>CCMA_ZYMMO</name>
<feature type="chain" id="PRO_0000092228" description="Cytochrome c biogenesis ATP-binding export protein CcmA">
    <location>
        <begin position="1"/>
        <end position="221"/>
    </location>
</feature>
<feature type="domain" description="ABC transporter" evidence="1">
    <location>
        <begin position="14"/>
        <end position="221"/>
    </location>
</feature>
<feature type="binding site" evidence="1">
    <location>
        <begin position="46"/>
        <end position="53"/>
    </location>
    <ligand>
        <name>ATP</name>
        <dbReference type="ChEBI" id="CHEBI:30616"/>
    </ligand>
</feature>
<protein>
    <recommendedName>
        <fullName evidence="1">Cytochrome c biogenesis ATP-binding export protein CcmA</fullName>
        <ecNumber evidence="1">7.6.2.5</ecNumber>
    </recommendedName>
    <alternativeName>
        <fullName evidence="1">Heme exporter protein A</fullName>
    </alternativeName>
</protein>
<proteinExistence type="inferred from homology"/>
<dbReference type="EC" id="7.6.2.5" evidence="1"/>
<dbReference type="EMBL" id="AE008692">
    <property type="protein sequence ID" value="AAV88884.2"/>
    <property type="molecule type" value="Genomic_DNA"/>
</dbReference>
<dbReference type="RefSeq" id="WP_011240202.1">
    <property type="nucleotide sequence ID" value="NZ_CP035711.1"/>
</dbReference>
<dbReference type="SMR" id="Q5NQX0"/>
<dbReference type="STRING" id="264203.ZMO0260"/>
<dbReference type="KEGG" id="zmo:ZMO0260"/>
<dbReference type="eggNOG" id="COG4133">
    <property type="taxonomic scope" value="Bacteria"/>
</dbReference>
<dbReference type="HOGENOM" id="CLU_000604_1_2_5"/>
<dbReference type="Proteomes" id="UP000001173">
    <property type="component" value="Chromosome"/>
</dbReference>
<dbReference type="GO" id="GO:0005886">
    <property type="term" value="C:plasma membrane"/>
    <property type="evidence" value="ECO:0007669"/>
    <property type="project" value="UniProtKB-SubCell"/>
</dbReference>
<dbReference type="GO" id="GO:0015439">
    <property type="term" value="F:ABC-type heme transporter activity"/>
    <property type="evidence" value="ECO:0007669"/>
    <property type="project" value="UniProtKB-EC"/>
</dbReference>
<dbReference type="GO" id="GO:0005524">
    <property type="term" value="F:ATP binding"/>
    <property type="evidence" value="ECO:0007669"/>
    <property type="project" value="UniProtKB-KW"/>
</dbReference>
<dbReference type="GO" id="GO:0016887">
    <property type="term" value="F:ATP hydrolysis activity"/>
    <property type="evidence" value="ECO:0007669"/>
    <property type="project" value="InterPro"/>
</dbReference>
<dbReference type="GO" id="GO:0017004">
    <property type="term" value="P:cytochrome complex assembly"/>
    <property type="evidence" value="ECO:0007669"/>
    <property type="project" value="UniProtKB-KW"/>
</dbReference>
<dbReference type="Gene3D" id="3.40.50.300">
    <property type="entry name" value="P-loop containing nucleotide triphosphate hydrolases"/>
    <property type="match status" value="1"/>
</dbReference>
<dbReference type="InterPro" id="IPR003593">
    <property type="entry name" value="AAA+_ATPase"/>
</dbReference>
<dbReference type="InterPro" id="IPR003439">
    <property type="entry name" value="ABC_transporter-like_ATP-bd"/>
</dbReference>
<dbReference type="InterPro" id="IPR005895">
    <property type="entry name" value="ABC_transptr_haem_export_CcmA"/>
</dbReference>
<dbReference type="InterPro" id="IPR027417">
    <property type="entry name" value="P-loop_NTPase"/>
</dbReference>
<dbReference type="NCBIfam" id="TIGR01189">
    <property type="entry name" value="ccmA"/>
    <property type="match status" value="1"/>
</dbReference>
<dbReference type="PANTHER" id="PTHR43499">
    <property type="entry name" value="ABC TRANSPORTER I FAMILY MEMBER 1"/>
    <property type="match status" value="1"/>
</dbReference>
<dbReference type="PANTHER" id="PTHR43499:SF1">
    <property type="entry name" value="ABC TRANSPORTER I FAMILY MEMBER 1"/>
    <property type="match status" value="1"/>
</dbReference>
<dbReference type="Pfam" id="PF00005">
    <property type="entry name" value="ABC_tran"/>
    <property type="match status" value="1"/>
</dbReference>
<dbReference type="SMART" id="SM00382">
    <property type="entry name" value="AAA"/>
    <property type="match status" value="1"/>
</dbReference>
<dbReference type="SUPFAM" id="SSF52540">
    <property type="entry name" value="P-loop containing nucleoside triphosphate hydrolases"/>
    <property type="match status" value="1"/>
</dbReference>
<dbReference type="PROSITE" id="PS50893">
    <property type="entry name" value="ABC_TRANSPORTER_2"/>
    <property type="match status" value="1"/>
</dbReference>
<dbReference type="PROSITE" id="PS51243">
    <property type="entry name" value="CCMA"/>
    <property type="match status" value="1"/>
</dbReference>
<keyword id="KW-0067">ATP-binding</keyword>
<keyword id="KW-0997">Cell inner membrane</keyword>
<keyword id="KW-1003">Cell membrane</keyword>
<keyword id="KW-0201">Cytochrome c-type biogenesis</keyword>
<keyword id="KW-0472">Membrane</keyword>
<keyword id="KW-0547">Nucleotide-binding</keyword>
<keyword id="KW-1185">Reference proteome</keyword>
<keyword id="KW-1278">Translocase</keyword>
<keyword id="KW-0813">Transport</keyword>
<organism>
    <name type="scientific">Zymomonas mobilis subsp. mobilis (strain ATCC 31821 / ZM4 / CP4)</name>
    <dbReference type="NCBI Taxonomy" id="264203"/>
    <lineage>
        <taxon>Bacteria</taxon>
        <taxon>Pseudomonadati</taxon>
        <taxon>Pseudomonadota</taxon>
        <taxon>Alphaproteobacteria</taxon>
        <taxon>Sphingomonadales</taxon>
        <taxon>Zymomonadaceae</taxon>
        <taxon>Zymomonas</taxon>
    </lineage>
</organism>